<evidence type="ECO:0000255" key="1">
    <source>
        <dbReference type="HAMAP-Rule" id="MF_04090"/>
    </source>
</evidence>
<evidence type="ECO:0000256" key="2">
    <source>
        <dbReference type="SAM" id="MobiDB-lite"/>
    </source>
</evidence>
<organism>
    <name type="scientific">Rotavirus X (strain RVX/Human/China/NADRV-J19/1997/GXP[X])</name>
    <name type="common">RV ADRV-N</name>
    <name type="synonym">Rotavirus (isolate novel adult diarrhea rotavirus-J19)</name>
    <dbReference type="NCBI Taxonomy" id="335103"/>
    <lineage>
        <taxon>Viruses</taxon>
        <taxon>Riboviria</taxon>
        <taxon>Orthornavirae</taxon>
        <taxon>Duplornaviricota</taxon>
        <taxon>Resentoviricetes</taxon>
        <taxon>Reovirales</taxon>
        <taxon>Sedoreoviridae</taxon>
        <taxon>Rotavirus</taxon>
        <taxon>Rotavirus H</taxon>
    </lineage>
</organism>
<feature type="chain" id="PRO_0000369850" description="Non-structural protein 3">
    <location>
        <begin position="1"/>
        <end position="262"/>
    </location>
</feature>
<feature type="region of interest" description="Disordered" evidence="2">
    <location>
        <begin position="224"/>
        <end position="248"/>
    </location>
</feature>
<feature type="coiled-coil region" evidence="1">
    <location>
        <begin position="138"/>
        <end position="179"/>
    </location>
</feature>
<feature type="compositionally biased region" description="Basic residues" evidence="2">
    <location>
        <begin position="229"/>
        <end position="238"/>
    </location>
</feature>
<accession>Q5Y9A9</accession>
<accession>Q45UF3</accession>
<sequence>MAELVCDALATLTRNTYGDNDESAKFCRMFRTMIRDSGLYGNIENWRAAFYRERLPKRMSHSTVSIQLDNLEREVLKIRAEGFCQGYTRKERTLNAFDLSDDGKGNTIIKPTTHLSSIILQNSYNSAFKLPKIPDGLLEKTRYELEEEKKNNDILKQKIKELENTISQLENYENEAKASQFVLEHLKFTNESLKIQRDEAQICLIGLCNKFGLQCEIDNSIHVTESDKKGKRKGRKNRRIEVSFGAPGHDLTEQISTLSDVE</sequence>
<reference key="1">
    <citation type="journal article" date="2004" name="Virus Res.">
        <title>Cloning and sequence analysis of dsRNA segments 5, 6 and 7 of a novel non-group A, B, C adult rotavirus that caused an outbreak of gastroenteritis in China.</title>
        <authorList>
            <person name="Yang H."/>
            <person name="Makeyev E.V."/>
            <person name="Kang Z."/>
            <person name="Ji S."/>
            <person name="Bamford D.H."/>
            <person name="van Dijk A.A."/>
        </authorList>
    </citation>
    <scope>NUCLEOTIDE SEQUENCE [GENOMIC RNA]</scope>
</reference>
<reference key="2">
    <citation type="journal article" date="2008" name="J. Gen. Virol.">
        <title>Molecular characterization of a novel adult diarrhoea rotavirus strain J19 isolated in China and its significance for the evolution and origin of group B rotaviruses.</title>
        <authorList>
            <person name="Jiang S."/>
            <person name="Ji S."/>
            <person name="Tang Q."/>
            <person name="Cui X."/>
            <person name="Yang H."/>
            <person name="Kan B."/>
            <person name="Gao S."/>
        </authorList>
    </citation>
    <scope>NUCLEOTIDE SEQUENCE [GENOMIC RNA]</scope>
</reference>
<dbReference type="EMBL" id="AY632081">
    <property type="protein sequence ID" value="AAU88190.1"/>
    <property type="molecule type" value="Genomic_RNA"/>
</dbReference>
<dbReference type="EMBL" id="DQ113904">
    <property type="protein sequence ID" value="AAZ03492.1"/>
    <property type="molecule type" value="Genomic_RNA"/>
</dbReference>
<dbReference type="RefSeq" id="YP_392497.1">
    <property type="nucleotide sequence ID" value="NC_007555.1"/>
</dbReference>
<dbReference type="SMR" id="Q5Y9A9"/>
<dbReference type="GeneID" id="5076657"/>
<dbReference type="KEGG" id="vg:5076657"/>
<dbReference type="Proteomes" id="UP000007663">
    <property type="component" value="Genome"/>
</dbReference>
<dbReference type="GO" id="GO:0030430">
    <property type="term" value="C:host cell cytoplasm"/>
    <property type="evidence" value="ECO:0007669"/>
    <property type="project" value="UniProtKB-SubCell"/>
</dbReference>
<dbReference type="GO" id="GO:0003723">
    <property type="term" value="F:RNA binding"/>
    <property type="evidence" value="ECO:0007669"/>
    <property type="project" value="UniProtKB-UniRule"/>
</dbReference>
<dbReference type="GO" id="GO:0006417">
    <property type="term" value="P:regulation of translation"/>
    <property type="evidence" value="ECO:0007669"/>
    <property type="project" value="UniProtKB-UniRule"/>
</dbReference>
<dbReference type="CDD" id="cd20714">
    <property type="entry name" value="NSP3_rotavirus"/>
    <property type="match status" value="1"/>
</dbReference>
<dbReference type="HAMAP" id="MF_04090">
    <property type="entry name" value="ROTA_NSP3"/>
    <property type="match status" value="1"/>
</dbReference>
<dbReference type="InterPro" id="IPR002873">
    <property type="entry name" value="Rotavirus_NSP3"/>
</dbReference>
<proteinExistence type="inferred from homology"/>
<comment type="function">
    <text evidence="1">May play a role in stimulating the translation of viral mRNAs.</text>
</comment>
<comment type="subcellular location">
    <subcellularLocation>
        <location evidence="1">Host cytoplasm</location>
    </subcellularLocation>
</comment>
<comment type="similarity">
    <text evidence="1">Belongs to the rotavirus NSP3 family.</text>
</comment>
<protein>
    <recommendedName>
        <fullName evidence="1">Non-structural protein 3</fullName>
        <shortName evidence="1">NSP3</shortName>
    </recommendedName>
    <alternativeName>
        <fullName evidence="1">NCVP4</fullName>
    </alternativeName>
    <alternativeName>
        <fullName evidence="1">Non-structural RNA-binding protein 34</fullName>
        <shortName evidence="1">NS34</shortName>
    </alternativeName>
</protein>
<keyword id="KW-0175">Coiled coil</keyword>
<keyword id="KW-1035">Host cytoplasm</keyword>
<keyword id="KW-1185">Reference proteome</keyword>
<keyword id="KW-0694">RNA-binding</keyword>
<keyword id="KW-0810">Translation regulation</keyword>
<name>NSP3_ROTJ1</name>
<organismHost>
    <name type="scientific">Homo sapiens</name>
    <name type="common">Human</name>
    <dbReference type="NCBI Taxonomy" id="9606"/>
</organismHost>